<proteinExistence type="evidence at transcript level"/>
<sequence length="173" mass="19449">MSWKALTILLVFSSTQATASCRWSRAALFPAAHRPKRSLSLPLNPVLQTSLEEVELLYELLLAEIEISPDLEISIKDEELASLRKALSFHSICNNIIPKRIPDIRRLSANLANHPGILKKEDFERITLTLAYTAYRTALSEGHQKDIWAQSLISLFQALRHDLMRSSSPAVSS</sequence>
<comment type="subcellular location">
    <subcellularLocation>
        <location evidence="2">Secreted</location>
    </subcellularLocation>
</comment>
<comment type="similarity">
    <text evidence="2">Belongs to the FAM180 family.</text>
</comment>
<dbReference type="EMBL" id="AK045849">
    <property type="protein sequence ID" value="BAC32511.1"/>
    <property type="molecule type" value="mRNA"/>
</dbReference>
<dbReference type="EMBL" id="AK157966">
    <property type="protein sequence ID" value="BAE34287.1"/>
    <property type="molecule type" value="mRNA"/>
</dbReference>
<dbReference type="EMBL" id="BC064033">
    <property type="protein sequence ID" value="AAH64033.1"/>
    <property type="molecule type" value="mRNA"/>
</dbReference>
<dbReference type="CCDS" id="CCDS20001.1"/>
<dbReference type="RefSeq" id="NP_775551.1">
    <property type="nucleotide sequence ID" value="NM_173375.2"/>
</dbReference>
<dbReference type="FunCoup" id="Q8BR21">
    <property type="interactions" value="1"/>
</dbReference>
<dbReference type="STRING" id="10090.ENSMUSP00000051206"/>
<dbReference type="PhosphoSitePlus" id="Q8BR21"/>
<dbReference type="PaxDb" id="10090-ENSMUSP00000051206"/>
<dbReference type="Antibodypedia" id="18164">
    <property type="antibodies" value="12 antibodies from 9 providers"/>
</dbReference>
<dbReference type="DNASU" id="208164"/>
<dbReference type="Ensembl" id="ENSMUST00000051176.9">
    <property type="protein sequence ID" value="ENSMUSP00000051206.8"/>
    <property type="gene ID" value="ENSMUSG00000047420.9"/>
</dbReference>
<dbReference type="GeneID" id="208164"/>
<dbReference type="KEGG" id="mmu:208164"/>
<dbReference type="UCSC" id="uc009bir.1">
    <property type="organism name" value="mouse"/>
</dbReference>
<dbReference type="AGR" id="MGI:3039626"/>
<dbReference type="CTD" id="389558"/>
<dbReference type="MGI" id="MGI:3039626">
    <property type="gene designation" value="Fam180a"/>
</dbReference>
<dbReference type="VEuPathDB" id="HostDB:ENSMUSG00000047420"/>
<dbReference type="eggNOG" id="ENOG502S335">
    <property type="taxonomic scope" value="Eukaryota"/>
</dbReference>
<dbReference type="GeneTree" id="ENSGT00940000154479"/>
<dbReference type="HOGENOM" id="CLU_105099_0_0_1"/>
<dbReference type="InParanoid" id="Q8BR21"/>
<dbReference type="OMA" id="QKDVWAQ"/>
<dbReference type="OrthoDB" id="8913792at2759"/>
<dbReference type="PhylomeDB" id="Q8BR21"/>
<dbReference type="TreeFam" id="TF333387"/>
<dbReference type="BioGRID-ORCS" id="208164">
    <property type="hits" value="2 hits in 78 CRISPR screens"/>
</dbReference>
<dbReference type="PRO" id="PR:Q8BR21"/>
<dbReference type="Proteomes" id="UP000000589">
    <property type="component" value="Chromosome 6"/>
</dbReference>
<dbReference type="RNAct" id="Q8BR21">
    <property type="molecule type" value="protein"/>
</dbReference>
<dbReference type="Bgee" id="ENSMUSG00000047420">
    <property type="expression patterns" value="Expressed in humerus cartilage element and 88 other cell types or tissues"/>
</dbReference>
<dbReference type="GO" id="GO:0005576">
    <property type="term" value="C:extracellular region"/>
    <property type="evidence" value="ECO:0007669"/>
    <property type="project" value="UniProtKB-SubCell"/>
</dbReference>
<dbReference type="InterPro" id="IPR029170">
    <property type="entry name" value="FAM180"/>
</dbReference>
<dbReference type="PANTHER" id="PTHR34034:SF2">
    <property type="entry name" value="PROTEIN FAM180A"/>
    <property type="match status" value="1"/>
</dbReference>
<dbReference type="PANTHER" id="PTHR34034">
    <property type="entry name" value="PROTEIN FAM180A-RELATED"/>
    <property type="match status" value="1"/>
</dbReference>
<dbReference type="Pfam" id="PF15173">
    <property type="entry name" value="FAM180"/>
    <property type="match status" value="1"/>
</dbReference>
<evidence type="ECO:0000255" key="1"/>
<evidence type="ECO:0000305" key="2"/>
<feature type="signal peptide" evidence="1">
    <location>
        <begin position="1"/>
        <end position="17"/>
    </location>
</feature>
<feature type="chain" id="PRO_0000317517" description="Protein FAM180A">
    <location>
        <begin position="18"/>
        <end position="173"/>
    </location>
</feature>
<keyword id="KW-1185">Reference proteome</keyword>
<keyword id="KW-0964">Secreted</keyword>
<keyword id="KW-0732">Signal</keyword>
<gene>
    <name type="primary">Fam180a</name>
</gene>
<reference key="1">
    <citation type="journal article" date="2005" name="Science">
        <title>The transcriptional landscape of the mammalian genome.</title>
        <authorList>
            <person name="Carninci P."/>
            <person name="Kasukawa T."/>
            <person name="Katayama S."/>
            <person name="Gough J."/>
            <person name="Frith M.C."/>
            <person name="Maeda N."/>
            <person name="Oyama R."/>
            <person name="Ravasi T."/>
            <person name="Lenhard B."/>
            <person name="Wells C."/>
            <person name="Kodzius R."/>
            <person name="Shimokawa K."/>
            <person name="Bajic V.B."/>
            <person name="Brenner S.E."/>
            <person name="Batalov S."/>
            <person name="Forrest A.R."/>
            <person name="Zavolan M."/>
            <person name="Davis M.J."/>
            <person name="Wilming L.G."/>
            <person name="Aidinis V."/>
            <person name="Allen J.E."/>
            <person name="Ambesi-Impiombato A."/>
            <person name="Apweiler R."/>
            <person name="Aturaliya R.N."/>
            <person name="Bailey T.L."/>
            <person name="Bansal M."/>
            <person name="Baxter L."/>
            <person name="Beisel K.W."/>
            <person name="Bersano T."/>
            <person name="Bono H."/>
            <person name="Chalk A.M."/>
            <person name="Chiu K.P."/>
            <person name="Choudhary V."/>
            <person name="Christoffels A."/>
            <person name="Clutterbuck D.R."/>
            <person name="Crowe M.L."/>
            <person name="Dalla E."/>
            <person name="Dalrymple B.P."/>
            <person name="de Bono B."/>
            <person name="Della Gatta G."/>
            <person name="di Bernardo D."/>
            <person name="Down T."/>
            <person name="Engstrom P."/>
            <person name="Fagiolini M."/>
            <person name="Faulkner G."/>
            <person name="Fletcher C.F."/>
            <person name="Fukushima T."/>
            <person name="Furuno M."/>
            <person name="Futaki S."/>
            <person name="Gariboldi M."/>
            <person name="Georgii-Hemming P."/>
            <person name="Gingeras T.R."/>
            <person name="Gojobori T."/>
            <person name="Green R.E."/>
            <person name="Gustincich S."/>
            <person name="Harbers M."/>
            <person name="Hayashi Y."/>
            <person name="Hensch T.K."/>
            <person name="Hirokawa N."/>
            <person name="Hill D."/>
            <person name="Huminiecki L."/>
            <person name="Iacono M."/>
            <person name="Ikeo K."/>
            <person name="Iwama A."/>
            <person name="Ishikawa T."/>
            <person name="Jakt M."/>
            <person name="Kanapin A."/>
            <person name="Katoh M."/>
            <person name="Kawasawa Y."/>
            <person name="Kelso J."/>
            <person name="Kitamura H."/>
            <person name="Kitano H."/>
            <person name="Kollias G."/>
            <person name="Krishnan S.P."/>
            <person name="Kruger A."/>
            <person name="Kummerfeld S.K."/>
            <person name="Kurochkin I.V."/>
            <person name="Lareau L.F."/>
            <person name="Lazarevic D."/>
            <person name="Lipovich L."/>
            <person name="Liu J."/>
            <person name="Liuni S."/>
            <person name="McWilliam S."/>
            <person name="Madan Babu M."/>
            <person name="Madera M."/>
            <person name="Marchionni L."/>
            <person name="Matsuda H."/>
            <person name="Matsuzawa S."/>
            <person name="Miki H."/>
            <person name="Mignone F."/>
            <person name="Miyake S."/>
            <person name="Morris K."/>
            <person name="Mottagui-Tabar S."/>
            <person name="Mulder N."/>
            <person name="Nakano N."/>
            <person name="Nakauchi H."/>
            <person name="Ng P."/>
            <person name="Nilsson R."/>
            <person name="Nishiguchi S."/>
            <person name="Nishikawa S."/>
            <person name="Nori F."/>
            <person name="Ohara O."/>
            <person name="Okazaki Y."/>
            <person name="Orlando V."/>
            <person name="Pang K.C."/>
            <person name="Pavan W.J."/>
            <person name="Pavesi G."/>
            <person name="Pesole G."/>
            <person name="Petrovsky N."/>
            <person name="Piazza S."/>
            <person name="Reed J."/>
            <person name="Reid J.F."/>
            <person name="Ring B.Z."/>
            <person name="Ringwald M."/>
            <person name="Rost B."/>
            <person name="Ruan Y."/>
            <person name="Salzberg S.L."/>
            <person name="Sandelin A."/>
            <person name="Schneider C."/>
            <person name="Schoenbach C."/>
            <person name="Sekiguchi K."/>
            <person name="Semple C.A."/>
            <person name="Seno S."/>
            <person name="Sessa L."/>
            <person name="Sheng Y."/>
            <person name="Shibata Y."/>
            <person name="Shimada H."/>
            <person name="Shimada K."/>
            <person name="Silva D."/>
            <person name="Sinclair B."/>
            <person name="Sperling S."/>
            <person name="Stupka E."/>
            <person name="Sugiura K."/>
            <person name="Sultana R."/>
            <person name="Takenaka Y."/>
            <person name="Taki K."/>
            <person name="Tammoja K."/>
            <person name="Tan S.L."/>
            <person name="Tang S."/>
            <person name="Taylor M.S."/>
            <person name="Tegner J."/>
            <person name="Teichmann S.A."/>
            <person name="Ueda H.R."/>
            <person name="van Nimwegen E."/>
            <person name="Verardo R."/>
            <person name="Wei C.L."/>
            <person name="Yagi K."/>
            <person name="Yamanishi H."/>
            <person name="Zabarovsky E."/>
            <person name="Zhu S."/>
            <person name="Zimmer A."/>
            <person name="Hide W."/>
            <person name="Bult C."/>
            <person name="Grimmond S.M."/>
            <person name="Teasdale R.D."/>
            <person name="Liu E.T."/>
            <person name="Brusic V."/>
            <person name="Quackenbush J."/>
            <person name="Wahlestedt C."/>
            <person name="Mattick J.S."/>
            <person name="Hume D.A."/>
            <person name="Kai C."/>
            <person name="Sasaki D."/>
            <person name="Tomaru Y."/>
            <person name="Fukuda S."/>
            <person name="Kanamori-Katayama M."/>
            <person name="Suzuki M."/>
            <person name="Aoki J."/>
            <person name="Arakawa T."/>
            <person name="Iida J."/>
            <person name="Imamura K."/>
            <person name="Itoh M."/>
            <person name="Kato T."/>
            <person name="Kawaji H."/>
            <person name="Kawagashira N."/>
            <person name="Kawashima T."/>
            <person name="Kojima M."/>
            <person name="Kondo S."/>
            <person name="Konno H."/>
            <person name="Nakano K."/>
            <person name="Ninomiya N."/>
            <person name="Nishio T."/>
            <person name="Okada M."/>
            <person name="Plessy C."/>
            <person name="Shibata K."/>
            <person name="Shiraki T."/>
            <person name="Suzuki S."/>
            <person name="Tagami M."/>
            <person name="Waki K."/>
            <person name="Watahiki A."/>
            <person name="Okamura-Oho Y."/>
            <person name="Suzuki H."/>
            <person name="Kawai J."/>
            <person name="Hayashizaki Y."/>
        </authorList>
    </citation>
    <scope>NUCLEOTIDE SEQUENCE [LARGE SCALE MRNA]</scope>
    <source>
        <strain>C57BL/6J</strain>
        <tissue>Corpora quadrigemina</tissue>
        <tissue>Inner ear</tissue>
    </source>
</reference>
<reference key="2">
    <citation type="journal article" date="2004" name="Genome Res.">
        <title>The status, quality, and expansion of the NIH full-length cDNA project: the Mammalian Gene Collection (MGC).</title>
        <authorList>
            <consortium name="The MGC Project Team"/>
        </authorList>
    </citation>
    <scope>NUCLEOTIDE SEQUENCE [LARGE SCALE MRNA]</scope>
    <source>
        <strain>C57BL/6J</strain>
        <tissue>Mammary gland</tissue>
    </source>
</reference>
<accession>Q8BR21</accession>
<name>F180A_MOUSE</name>
<protein>
    <recommendedName>
        <fullName>Protein FAM180A</fullName>
    </recommendedName>
</protein>
<organism>
    <name type="scientific">Mus musculus</name>
    <name type="common">Mouse</name>
    <dbReference type="NCBI Taxonomy" id="10090"/>
    <lineage>
        <taxon>Eukaryota</taxon>
        <taxon>Metazoa</taxon>
        <taxon>Chordata</taxon>
        <taxon>Craniata</taxon>
        <taxon>Vertebrata</taxon>
        <taxon>Euteleostomi</taxon>
        <taxon>Mammalia</taxon>
        <taxon>Eutheria</taxon>
        <taxon>Euarchontoglires</taxon>
        <taxon>Glires</taxon>
        <taxon>Rodentia</taxon>
        <taxon>Myomorpha</taxon>
        <taxon>Muroidea</taxon>
        <taxon>Muridae</taxon>
        <taxon>Murinae</taxon>
        <taxon>Mus</taxon>
        <taxon>Mus</taxon>
    </lineage>
</organism>